<keyword id="KW-0963">Cytoplasm</keyword>
<keyword id="KW-0489">Methyltransferase</keyword>
<keyword id="KW-1185">Reference proteome</keyword>
<keyword id="KW-0694">RNA-binding</keyword>
<keyword id="KW-0698">rRNA processing</keyword>
<keyword id="KW-0949">S-adenosyl-L-methionine</keyword>
<keyword id="KW-0808">Transferase</keyword>
<proteinExistence type="inferred from homology"/>
<comment type="function">
    <text evidence="1">Specifically dimethylates two adjacent adenosines (A1518 and A1519) in the loop of a conserved hairpin near the 3'-end of 16S rRNA in the 30S particle. May play a critical role in biogenesis of 30S subunits.</text>
</comment>
<comment type="catalytic activity">
    <reaction evidence="1">
        <text>adenosine(1518)/adenosine(1519) in 16S rRNA + 4 S-adenosyl-L-methionine = N(6)-dimethyladenosine(1518)/N(6)-dimethyladenosine(1519) in 16S rRNA + 4 S-adenosyl-L-homocysteine + 4 H(+)</text>
        <dbReference type="Rhea" id="RHEA:19609"/>
        <dbReference type="Rhea" id="RHEA-COMP:10232"/>
        <dbReference type="Rhea" id="RHEA-COMP:10233"/>
        <dbReference type="ChEBI" id="CHEBI:15378"/>
        <dbReference type="ChEBI" id="CHEBI:57856"/>
        <dbReference type="ChEBI" id="CHEBI:59789"/>
        <dbReference type="ChEBI" id="CHEBI:74411"/>
        <dbReference type="ChEBI" id="CHEBI:74493"/>
        <dbReference type="EC" id="2.1.1.182"/>
    </reaction>
</comment>
<comment type="subcellular location">
    <subcellularLocation>
        <location evidence="1">Cytoplasm</location>
    </subcellularLocation>
</comment>
<comment type="similarity">
    <text evidence="1">Belongs to the class I-like SAM-binding methyltransferase superfamily. rRNA adenine N(6)-methyltransferase family. RsmA subfamily.</text>
</comment>
<sequence length="286" mass="31782">MIRPRKVFAQHWLKSEKALDAIIKAAECTESDRSPKGDCILEIGPGTGILTRRLLPLVQSLIAVEIDRDLCQLLSKQLGKTENFLLLQGDFLTLDLPSYLVAFPNFQKPNKVVANIPYNITGPIIEKLLGTIANPNPEPFDSIVLLVQKEVAERLYAKPGSKTFGALSVRVQYLAECELICTVPASAFHPAPKVDSAVVRLRPRKIEIPALNPRQLETFLKLGFGAKRKMLRNNLQSVIERDRLSHLLEQLKINPQARAEDISVQQWVILANELAVASGEQGVGNR</sequence>
<gene>
    <name evidence="1" type="primary">rsmA</name>
    <name evidence="1" type="synonym">ksgA</name>
    <name type="ordered locus">Npun_R4912</name>
</gene>
<feature type="chain" id="PRO_1000130301" description="Ribosomal RNA small subunit methyltransferase A">
    <location>
        <begin position="1"/>
        <end position="286"/>
    </location>
</feature>
<feature type="binding site" evidence="1">
    <location>
        <position position="11"/>
    </location>
    <ligand>
        <name>S-adenosyl-L-methionine</name>
        <dbReference type="ChEBI" id="CHEBI:59789"/>
    </ligand>
</feature>
<feature type="binding site" evidence="1">
    <location>
        <position position="13"/>
    </location>
    <ligand>
        <name>S-adenosyl-L-methionine</name>
        <dbReference type="ChEBI" id="CHEBI:59789"/>
    </ligand>
</feature>
<feature type="binding site" evidence="1">
    <location>
        <position position="44"/>
    </location>
    <ligand>
        <name>S-adenosyl-L-methionine</name>
        <dbReference type="ChEBI" id="CHEBI:59789"/>
    </ligand>
</feature>
<feature type="binding site" evidence="1">
    <location>
        <position position="65"/>
    </location>
    <ligand>
        <name>S-adenosyl-L-methionine</name>
        <dbReference type="ChEBI" id="CHEBI:59789"/>
    </ligand>
</feature>
<feature type="binding site" evidence="1">
    <location>
        <position position="90"/>
    </location>
    <ligand>
        <name>S-adenosyl-L-methionine</name>
        <dbReference type="ChEBI" id="CHEBI:59789"/>
    </ligand>
</feature>
<feature type="binding site" evidence="1">
    <location>
        <position position="115"/>
    </location>
    <ligand>
        <name>S-adenosyl-L-methionine</name>
        <dbReference type="ChEBI" id="CHEBI:59789"/>
    </ligand>
</feature>
<name>RSMA_NOSP7</name>
<reference key="1">
    <citation type="journal article" date="2013" name="Plant Physiol.">
        <title>A Nostoc punctiforme Sugar Transporter Necessary to Establish a Cyanobacterium-Plant Symbiosis.</title>
        <authorList>
            <person name="Ekman M."/>
            <person name="Picossi S."/>
            <person name="Campbell E.L."/>
            <person name="Meeks J.C."/>
            <person name="Flores E."/>
        </authorList>
    </citation>
    <scope>NUCLEOTIDE SEQUENCE [LARGE SCALE GENOMIC DNA]</scope>
    <source>
        <strain>ATCC 29133 / PCC 73102</strain>
    </source>
</reference>
<organism>
    <name type="scientific">Nostoc punctiforme (strain ATCC 29133 / PCC 73102)</name>
    <dbReference type="NCBI Taxonomy" id="63737"/>
    <lineage>
        <taxon>Bacteria</taxon>
        <taxon>Bacillati</taxon>
        <taxon>Cyanobacteriota</taxon>
        <taxon>Cyanophyceae</taxon>
        <taxon>Nostocales</taxon>
        <taxon>Nostocaceae</taxon>
        <taxon>Nostoc</taxon>
    </lineage>
</organism>
<evidence type="ECO:0000255" key="1">
    <source>
        <dbReference type="HAMAP-Rule" id="MF_00607"/>
    </source>
</evidence>
<protein>
    <recommendedName>
        <fullName evidence="1">Ribosomal RNA small subunit methyltransferase A</fullName>
        <ecNumber evidence="1">2.1.1.182</ecNumber>
    </recommendedName>
    <alternativeName>
        <fullName evidence="1">16S rRNA (adenine(1518)-N(6)/adenine(1519)-N(6))-dimethyltransferase</fullName>
    </alternativeName>
    <alternativeName>
        <fullName evidence="1">16S rRNA dimethyladenosine transferase</fullName>
    </alternativeName>
    <alternativeName>
        <fullName evidence="1">16S rRNA dimethylase</fullName>
    </alternativeName>
    <alternativeName>
        <fullName evidence="1">S-adenosylmethionine-6-N', N'-adenosyl(rRNA) dimethyltransferase</fullName>
    </alternativeName>
</protein>
<dbReference type="EC" id="2.1.1.182" evidence="1"/>
<dbReference type="EMBL" id="CP001037">
    <property type="protein sequence ID" value="ACC83258.1"/>
    <property type="molecule type" value="Genomic_DNA"/>
</dbReference>
<dbReference type="RefSeq" id="WP_012411214.1">
    <property type="nucleotide sequence ID" value="NC_010628.1"/>
</dbReference>
<dbReference type="SMR" id="B2J0A6"/>
<dbReference type="STRING" id="63737.Npun_R4912"/>
<dbReference type="EnsemblBacteria" id="ACC83258">
    <property type="protein sequence ID" value="ACC83258"/>
    <property type="gene ID" value="Npun_R4912"/>
</dbReference>
<dbReference type="KEGG" id="npu:Npun_R4912"/>
<dbReference type="eggNOG" id="COG0030">
    <property type="taxonomic scope" value="Bacteria"/>
</dbReference>
<dbReference type="HOGENOM" id="CLU_041220_0_1_3"/>
<dbReference type="OrthoDB" id="9814755at2"/>
<dbReference type="PhylomeDB" id="B2J0A6"/>
<dbReference type="Proteomes" id="UP000001191">
    <property type="component" value="Chromosome"/>
</dbReference>
<dbReference type="GO" id="GO:0005829">
    <property type="term" value="C:cytosol"/>
    <property type="evidence" value="ECO:0007669"/>
    <property type="project" value="TreeGrafter"/>
</dbReference>
<dbReference type="GO" id="GO:0052908">
    <property type="term" value="F:16S rRNA (adenine(1518)-N(6)/adenine(1519)-N(6))-dimethyltransferase activity"/>
    <property type="evidence" value="ECO:0007669"/>
    <property type="project" value="UniProtKB-EC"/>
</dbReference>
<dbReference type="GO" id="GO:0003723">
    <property type="term" value="F:RNA binding"/>
    <property type="evidence" value="ECO:0007669"/>
    <property type="project" value="UniProtKB-KW"/>
</dbReference>
<dbReference type="CDD" id="cd02440">
    <property type="entry name" value="AdoMet_MTases"/>
    <property type="match status" value="1"/>
</dbReference>
<dbReference type="FunFam" id="1.10.8.100:FF:000001">
    <property type="entry name" value="Ribosomal RNA small subunit methyltransferase A"/>
    <property type="match status" value="1"/>
</dbReference>
<dbReference type="Gene3D" id="1.10.8.100">
    <property type="entry name" value="Ribosomal RNA adenine dimethylase-like, domain 2"/>
    <property type="match status" value="1"/>
</dbReference>
<dbReference type="Gene3D" id="3.40.50.150">
    <property type="entry name" value="Vaccinia Virus protein VP39"/>
    <property type="match status" value="1"/>
</dbReference>
<dbReference type="HAMAP" id="MF_00607">
    <property type="entry name" value="16SrRNA_methyltr_A"/>
    <property type="match status" value="1"/>
</dbReference>
<dbReference type="InterPro" id="IPR001737">
    <property type="entry name" value="KsgA/Erm"/>
</dbReference>
<dbReference type="InterPro" id="IPR023165">
    <property type="entry name" value="rRNA_Ade_diMease-like_C"/>
</dbReference>
<dbReference type="InterPro" id="IPR020596">
    <property type="entry name" value="rRNA_Ade_Mease_Trfase_CS"/>
</dbReference>
<dbReference type="InterPro" id="IPR020598">
    <property type="entry name" value="rRNA_Ade_methylase_Trfase_N"/>
</dbReference>
<dbReference type="InterPro" id="IPR011530">
    <property type="entry name" value="rRNA_adenine_dimethylase"/>
</dbReference>
<dbReference type="InterPro" id="IPR029063">
    <property type="entry name" value="SAM-dependent_MTases_sf"/>
</dbReference>
<dbReference type="NCBIfam" id="TIGR00755">
    <property type="entry name" value="ksgA"/>
    <property type="match status" value="1"/>
</dbReference>
<dbReference type="PANTHER" id="PTHR11727">
    <property type="entry name" value="DIMETHYLADENOSINE TRANSFERASE"/>
    <property type="match status" value="1"/>
</dbReference>
<dbReference type="PANTHER" id="PTHR11727:SF7">
    <property type="entry name" value="DIMETHYLADENOSINE TRANSFERASE-RELATED"/>
    <property type="match status" value="1"/>
</dbReference>
<dbReference type="Pfam" id="PF00398">
    <property type="entry name" value="RrnaAD"/>
    <property type="match status" value="1"/>
</dbReference>
<dbReference type="SMART" id="SM00650">
    <property type="entry name" value="rADc"/>
    <property type="match status" value="1"/>
</dbReference>
<dbReference type="SUPFAM" id="SSF53335">
    <property type="entry name" value="S-adenosyl-L-methionine-dependent methyltransferases"/>
    <property type="match status" value="1"/>
</dbReference>
<dbReference type="PROSITE" id="PS01131">
    <property type="entry name" value="RRNA_A_DIMETH"/>
    <property type="match status" value="1"/>
</dbReference>
<dbReference type="PROSITE" id="PS51689">
    <property type="entry name" value="SAM_RNA_A_N6_MT"/>
    <property type="match status" value="1"/>
</dbReference>
<accession>B2J0A6</accession>